<dbReference type="EMBL" id="CP000789">
    <property type="protein sequence ID" value="ABU70183.1"/>
    <property type="molecule type" value="Genomic_DNA"/>
</dbReference>
<dbReference type="RefSeq" id="WP_005530679.1">
    <property type="nucleotide sequence ID" value="NC_022269.1"/>
</dbReference>
<dbReference type="SMR" id="A7MYB9"/>
<dbReference type="KEGG" id="vha:VIBHAR_01194"/>
<dbReference type="PATRIC" id="fig|338187.25.peg.1436"/>
<dbReference type="Proteomes" id="UP000008152">
    <property type="component" value="Chromosome I"/>
</dbReference>
<dbReference type="GO" id="GO:0009898">
    <property type="term" value="C:cytoplasmic side of plasma membrane"/>
    <property type="evidence" value="ECO:0007669"/>
    <property type="project" value="InterPro"/>
</dbReference>
<dbReference type="CDD" id="cd16323">
    <property type="entry name" value="Syd"/>
    <property type="match status" value="1"/>
</dbReference>
<dbReference type="Gene3D" id="3.40.1580.20">
    <property type="entry name" value="Syd protein"/>
    <property type="match status" value="1"/>
</dbReference>
<dbReference type="HAMAP" id="MF_01104">
    <property type="entry name" value="Syd"/>
    <property type="match status" value="1"/>
</dbReference>
<dbReference type="InterPro" id="IPR009948">
    <property type="entry name" value="Syd"/>
</dbReference>
<dbReference type="InterPro" id="IPR038228">
    <property type="entry name" value="Syd_sf"/>
</dbReference>
<dbReference type="NCBIfam" id="NF003439">
    <property type="entry name" value="PRK04968.1"/>
    <property type="match status" value="1"/>
</dbReference>
<dbReference type="Pfam" id="PF07348">
    <property type="entry name" value="Syd"/>
    <property type="match status" value="1"/>
</dbReference>
<organism>
    <name type="scientific">Vibrio campbellii (strain ATCC BAA-1116)</name>
    <dbReference type="NCBI Taxonomy" id="2902295"/>
    <lineage>
        <taxon>Bacteria</taxon>
        <taxon>Pseudomonadati</taxon>
        <taxon>Pseudomonadota</taxon>
        <taxon>Gammaproteobacteria</taxon>
        <taxon>Vibrionales</taxon>
        <taxon>Vibrionaceae</taxon>
        <taxon>Vibrio</taxon>
    </lineage>
</organism>
<keyword id="KW-0997">Cell inner membrane</keyword>
<keyword id="KW-1003">Cell membrane</keyword>
<keyword id="KW-0472">Membrane</keyword>
<gene>
    <name evidence="1" type="primary">syd</name>
    <name type="ordered locus">VIBHAR_01194</name>
</gene>
<protein>
    <recommendedName>
        <fullName evidence="1">Protein Syd</fullName>
    </recommendedName>
</protein>
<accession>A7MYB9</accession>
<feature type="chain" id="PRO_1000065046" description="Protein Syd">
    <location>
        <begin position="1"/>
        <end position="181"/>
    </location>
</feature>
<proteinExistence type="inferred from homology"/>
<evidence type="ECO:0000255" key="1">
    <source>
        <dbReference type="HAMAP-Rule" id="MF_01104"/>
    </source>
</evidence>
<reference key="1">
    <citation type="submission" date="2007-08" db="EMBL/GenBank/DDBJ databases">
        <authorList>
            <consortium name="The Vibrio harveyi Genome Sequencing Project"/>
            <person name="Bassler B."/>
            <person name="Clifton S.W."/>
            <person name="Fulton L."/>
            <person name="Delehaunty K."/>
            <person name="Fronick C."/>
            <person name="Harrison M."/>
            <person name="Markivic C."/>
            <person name="Fulton R."/>
            <person name="Tin-Wollam A.-M."/>
            <person name="Shah N."/>
            <person name="Pepin K."/>
            <person name="Nash W."/>
            <person name="Thiruvilangam P."/>
            <person name="Bhonagiri V."/>
            <person name="Waters C."/>
            <person name="Tu K.C."/>
            <person name="Irgon J."/>
            <person name="Wilson R.K."/>
        </authorList>
    </citation>
    <scope>NUCLEOTIDE SEQUENCE [LARGE SCALE GENOMIC DNA]</scope>
    <source>
        <strain>ATCC BAA-1116 / BB120</strain>
    </source>
</reference>
<name>SYDP_VIBC1</name>
<comment type="function">
    <text evidence="1">Interacts with the SecY protein in vivo. May bind preferentially to an uncomplexed state of SecY, thus functioning either as a chelating agent for excess SecY in the cell or as a regulatory factor that negatively controls the translocase function.</text>
</comment>
<comment type="subcellular location">
    <subcellularLocation>
        <location evidence="1">Cell inner membrane</location>
        <topology evidence="1">Peripheral membrane protein</topology>
        <orientation evidence="1">Cytoplasmic side</orientation>
    </subcellularLocation>
    <text evidence="1">Loosely associated with the cytoplasmic side of the inner membrane, probably via SecY.</text>
</comment>
<comment type="similarity">
    <text evidence="1">Belongs to the Syd family.</text>
</comment>
<sequence>MTQTVPQALQDFSLRYQQAWQDKHNELPRSEELADLVSPCVEEKRDGAVLWKAFPREEMADFTNVENAIELTLHEDIKLFFGSQYSADMDATWQGNELTLLQVWSDDDFTRLQENILGHLVTQRRLKLKPTVFIAATDAELDVISICNLTGNVILERLGSDKRDVLAETLTEFLSKLEAAV</sequence>